<protein>
    <recommendedName>
        <fullName evidence="1">UPF0102 protein VF_2212</fullName>
    </recommendedName>
</protein>
<gene>
    <name type="ordered locus">VF_2212</name>
</gene>
<name>Y2212_ALIF1</name>
<accession>Q5E2N9</accession>
<keyword id="KW-1185">Reference proteome</keyword>
<comment type="similarity">
    <text evidence="1">Belongs to the UPF0102 family.</text>
</comment>
<organism>
    <name type="scientific">Aliivibrio fischeri (strain ATCC 700601 / ES114)</name>
    <name type="common">Vibrio fischeri</name>
    <dbReference type="NCBI Taxonomy" id="312309"/>
    <lineage>
        <taxon>Bacteria</taxon>
        <taxon>Pseudomonadati</taxon>
        <taxon>Pseudomonadota</taxon>
        <taxon>Gammaproteobacteria</taxon>
        <taxon>Vibrionales</taxon>
        <taxon>Vibrionaceae</taxon>
        <taxon>Aliivibrio</taxon>
    </lineage>
</organism>
<evidence type="ECO:0000255" key="1">
    <source>
        <dbReference type="HAMAP-Rule" id="MF_00048"/>
    </source>
</evidence>
<sequence>MEKKQNKRAKGEFYELMAQRYLEQHQLTFIARNFQSKTGELDLIMRDQDSFVFVEVKYRNTSNFGSAQEMVTWQKQRKLQRTALFWLMKNKLSVEHTSFRFDVVAIHAQGKEINWIKNAIVEG</sequence>
<reference key="1">
    <citation type="journal article" date="2005" name="Proc. Natl. Acad. Sci. U.S.A.">
        <title>Complete genome sequence of Vibrio fischeri: a symbiotic bacterium with pathogenic congeners.</title>
        <authorList>
            <person name="Ruby E.G."/>
            <person name="Urbanowski M."/>
            <person name="Campbell J."/>
            <person name="Dunn A."/>
            <person name="Faini M."/>
            <person name="Gunsalus R."/>
            <person name="Lostroh P."/>
            <person name="Lupp C."/>
            <person name="McCann J."/>
            <person name="Millikan D."/>
            <person name="Schaefer A."/>
            <person name="Stabb E."/>
            <person name="Stevens A."/>
            <person name="Visick K."/>
            <person name="Whistler C."/>
            <person name="Greenberg E.P."/>
        </authorList>
    </citation>
    <scope>NUCLEOTIDE SEQUENCE [LARGE SCALE GENOMIC DNA]</scope>
    <source>
        <strain>ATCC 700601 / ES114</strain>
    </source>
</reference>
<proteinExistence type="inferred from homology"/>
<feature type="chain" id="PRO_0000336283" description="UPF0102 protein VF_2212">
    <location>
        <begin position="1"/>
        <end position="123"/>
    </location>
</feature>
<dbReference type="EMBL" id="CP000020">
    <property type="protein sequence ID" value="AAW86707.1"/>
    <property type="molecule type" value="Genomic_DNA"/>
</dbReference>
<dbReference type="RefSeq" id="WP_005420941.1">
    <property type="nucleotide sequence ID" value="NZ_CAWLES010000001.1"/>
</dbReference>
<dbReference type="RefSeq" id="YP_205595.1">
    <property type="nucleotide sequence ID" value="NC_006840.2"/>
</dbReference>
<dbReference type="SMR" id="Q5E2N9"/>
<dbReference type="STRING" id="312309.VF_2212"/>
<dbReference type="DNASU" id="3279510"/>
<dbReference type="EnsemblBacteria" id="AAW86707">
    <property type="protein sequence ID" value="AAW86707"/>
    <property type="gene ID" value="VF_2212"/>
</dbReference>
<dbReference type="GeneID" id="54164929"/>
<dbReference type="KEGG" id="vfi:VF_2212"/>
<dbReference type="PATRIC" id="fig|312309.11.peg.2251"/>
<dbReference type="eggNOG" id="COG0792">
    <property type="taxonomic scope" value="Bacteria"/>
</dbReference>
<dbReference type="HOGENOM" id="CLU_115353_1_1_6"/>
<dbReference type="OrthoDB" id="9794876at2"/>
<dbReference type="Proteomes" id="UP000000537">
    <property type="component" value="Chromosome I"/>
</dbReference>
<dbReference type="GO" id="GO:0003676">
    <property type="term" value="F:nucleic acid binding"/>
    <property type="evidence" value="ECO:0007669"/>
    <property type="project" value="InterPro"/>
</dbReference>
<dbReference type="CDD" id="cd20736">
    <property type="entry name" value="PoNe_Nuclease"/>
    <property type="match status" value="1"/>
</dbReference>
<dbReference type="Gene3D" id="3.40.1350.10">
    <property type="match status" value="1"/>
</dbReference>
<dbReference type="HAMAP" id="MF_00048">
    <property type="entry name" value="UPF0102"/>
    <property type="match status" value="1"/>
</dbReference>
<dbReference type="InterPro" id="IPR011335">
    <property type="entry name" value="Restrct_endonuc-II-like"/>
</dbReference>
<dbReference type="InterPro" id="IPR011856">
    <property type="entry name" value="tRNA_endonuc-like_dom_sf"/>
</dbReference>
<dbReference type="InterPro" id="IPR003509">
    <property type="entry name" value="UPF0102_YraN-like"/>
</dbReference>
<dbReference type="NCBIfam" id="NF009150">
    <property type="entry name" value="PRK12497.1-3"/>
    <property type="match status" value="1"/>
</dbReference>
<dbReference type="NCBIfam" id="TIGR00252">
    <property type="entry name" value="YraN family protein"/>
    <property type="match status" value="1"/>
</dbReference>
<dbReference type="PANTHER" id="PTHR34039">
    <property type="entry name" value="UPF0102 PROTEIN YRAN"/>
    <property type="match status" value="1"/>
</dbReference>
<dbReference type="PANTHER" id="PTHR34039:SF1">
    <property type="entry name" value="UPF0102 PROTEIN YRAN"/>
    <property type="match status" value="1"/>
</dbReference>
<dbReference type="Pfam" id="PF02021">
    <property type="entry name" value="UPF0102"/>
    <property type="match status" value="1"/>
</dbReference>
<dbReference type="SUPFAM" id="SSF52980">
    <property type="entry name" value="Restriction endonuclease-like"/>
    <property type="match status" value="1"/>
</dbReference>